<evidence type="ECO:0000250" key="1">
    <source>
        <dbReference type="UniProtKB" id="P22352"/>
    </source>
</evidence>
<evidence type="ECO:0000255" key="2"/>
<evidence type="ECO:0000305" key="3"/>
<evidence type="ECO:0000312" key="4">
    <source>
        <dbReference type="RGD" id="69224"/>
    </source>
</evidence>
<protein>
    <recommendedName>
        <fullName evidence="3">Glutathione peroxidase 3</fullName>
        <shortName>GPx-3</shortName>
        <shortName>GSHPx-3</shortName>
        <ecNumber evidence="1">1.11.1.9</ecNumber>
    </recommendedName>
    <alternativeName>
        <fullName>Plasma glutathione peroxidase</fullName>
        <shortName>GPx-P</shortName>
        <shortName>GSHPx-P</shortName>
    </alternativeName>
</protein>
<gene>
    <name evidence="4" type="primary">Gpx3</name>
</gene>
<accession>P23764</accession>
<accession>Q6P6H2</accession>
<keyword id="KW-0560">Oxidoreductase</keyword>
<keyword id="KW-0575">Peroxidase</keyword>
<keyword id="KW-1185">Reference proteome</keyword>
<keyword id="KW-0964">Secreted</keyword>
<keyword id="KW-0712">Selenocysteine</keyword>
<keyword id="KW-0732">Signal</keyword>
<sequence>MARILRASCLLSLLLAGFVPPGRGQEKSKTDCHGGMSGTIYEYGALTIDGEEYIPFKQYAGKYILFVNVASYUGLTDQYLELNALQEELGPFGLVILGFPCNQFGKQEPGENSEILPSLKYVRPGGGFVPNFQLFEKGDVNGEKEQKFYTFLKNSCPPTAELLGSPGRLFWEPMKIHDIRWNFEKFLVGPDGIPIMRWYHRTTVSNVKMDILSYMRRQAALGARGK</sequence>
<organism>
    <name type="scientific">Rattus norvegicus</name>
    <name type="common">Rat</name>
    <dbReference type="NCBI Taxonomy" id="10116"/>
    <lineage>
        <taxon>Eukaryota</taxon>
        <taxon>Metazoa</taxon>
        <taxon>Chordata</taxon>
        <taxon>Craniata</taxon>
        <taxon>Vertebrata</taxon>
        <taxon>Euteleostomi</taxon>
        <taxon>Mammalia</taxon>
        <taxon>Eutheria</taxon>
        <taxon>Euarchontoglires</taxon>
        <taxon>Glires</taxon>
        <taxon>Rodentia</taxon>
        <taxon>Myomorpha</taxon>
        <taxon>Muroidea</taxon>
        <taxon>Muridae</taxon>
        <taxon>Murinae</taxon>
        <taxon>Rattus</taxon>
    </lineage>
</organism>
<name>GPX3_RAT</name>
<comment type="function">
    <text evidence="1">Protects cells and enzymes from oxidative damage, by catalyzing the reduction of hydrogen peroxide, lipid peroxides and organic hydroperoxide, by glutathione.</text>
</comment>
<comment type="catalytic activity">
    <reaction evidence="1">
        <text>2 glutathione + H2O2 = glutathione disulfide + 2 H2O</text>
        <dbReference type="Rhea" id="RHEA:16833"/>
        <dbReference type="ChEBI" id="CHEBI:15377"/>
        <dbReference type="ChEBI" id="CHEBI:16240"/>
        <dbReference type="ChEBI" id="CHEBI:57925"/>
        <dbReference type="ChEBI" id="CHEBI:58297"/>
        <dbReference type="EC" id="1.11.1.9"/>
    </reaction>
</comment>
<comment type="catalytic activity">
    <reaction evidence="1">
        <text>tert-butyl hydroperoxide + 2 glutathione = tert-butanol + glutathione disulfide + H2O</text>
        <dbReference type="Rhea" id="RHEA:69412"/>
        <dbReference type="ChEBI" id="CHEBI:15377"/>
        <dbReference type="ChEBI" id="CHEBI:45895"/>
        <dbReference type="ChEBI" id="CHEBI:57925"/>
        <dbReference type="ChEBI" id="CHEBI:58297"/>
        <dbReference type="ChEBI" id="CHEBI:64090"/>
    </reaction>
</comment>
<comment type="subunit">
    <text>Homotetramer.</text>
</comment>
<comment type="subcellular location">
    <subcellularLocation>
        <location>Secreted</location>
    </subcellularLocation>
</comment>
<comment type="tissue specificity">
    <text>Secreted in plasma.</text>
</comment>
<comment type="similarity">
    <text evidence="3">Belongs to the glutathione peroxidase family.</text>
</comment>
<reference key="1">
    <citation type="journal article" date="1991" name="J. Biochem.">
        <title>Tissue specific expression of the plasma glutathione peroxidase gene in rat kidney.</title>
        <authorList>
            <person name="Yoshimura S."/>
            <person name="Watanabe K."/>
            <person name="Suemizu H."/>
            <person name="Onozawa T."/>
            <person name="Mizoguchi J."/>
            <person name="Tsuda K."/>
            <person name="Hatta H."/>
            <person name="Moriuchi T."/>
        </authorList>
    </citation>
    <scope>NUCLEOTIDE SEQUENCE [MRNA]</scope>
    <source>
        <tissue>Kidney</tissue>
    </source>
</reference>
<reference key="2">
    <citation type="journal article" date="2004" name="Genome Res.">
        <title>The status, quality, and expansion of the NIH full-length cDNA project: the Mammalian Gene Collection (MGC).</title>
        <authorList>
            <consortium name="The MGC Project Team"/>
        </authorList>
    </citation>
    <scope>NUCLEOTIDE SEQUENCE [LARGE SCALE MRNA]</scope>
    <source>
        <tissue>Pituitary</tissue>
    </source>
</reference>
<feature type="signal peptide" evidence="2">
    <location>
        <begin position="1"/>
        <end position="24"/>
    </location>
</feature>
<feature type="chain" id="PRO_0000013064" description="Glutathione peroxidase 3">
    <location>
        <begin position="25"/>
        <end position="226"/>
    </location>
</feature>
<feature type="active site">
    <location>
        <position position="73"/>
    </location>
</feature>
<feature type="non-standard amino acid" description="Selenocysteine">
    <location>
        <position position="73"/>
    </location>
</feature>
<feature type="sequence conflict" description="In Ref. 1; BAA00587." evidence="3" ref="1">
    <original>A</original>
    <variation>S</variation>
    <location>
        <position position="2"/>
    </location>
</feature>
<proteinExistence type="evidence at transcript level"/>
<dbReference type="EC" id="1.11.1.9" evidence="1"/>
<dbReference type="EMBL" id="D00680">
    <property type="protein sequence ID" value="BAA00587.2"/>
    <property type="molecule type" value="mRNA"/>
</dbReference>
<dbReference type="EMBL" id="BC062227">
    <property type="protein sequence ID" value="AAH62227.1"/>
    <property type="molecule type" value="mRNA"/>
</dbReference>
<dbReference type="PIR" id="JX0176">
    <property type="entry name" value="JX0176"/>
</dbReference>
<dbReference type="RefSeq" id="NP_071970.2">
    <property type="nucleotide sequence ID" value="NM_022525.4"/>
</dbReference>
<dbReference type="FunCoup" id="P23764">
    <property type="interactions" value="150"/>
</dbReference>
<dbReference type="STRING" id="10116.ENSRNOP00000073271"/>
<dbReference type="PeroxiBase" id="3732">
    <property type="entry name" value="RnoGPx03"/>
</dbReference>
<dbReference type="iPTMnet" id="P23764"/>
<dbReference type="PhosphoSitePlus" id="P23764"/>
<dbReference type="GeneID" id="64317"/>
<dbReference type="KEGG" id="rno:64317"/>
<dbReference type="UCSC" id="RGD:69224">
    <property type="organism name" value="rat"/>
</dbReference>
<dbReference type="AGR" id="RGD:69224"/>
<dbReference type="CTD" id="2878"/>
<dbReference type="RGD" id="69224">
    <property type="gene designation" value="Gpx3"/>
</dbReference>
<dbReference type="InParanoid" id="P23764"/>
<dbReference type="OrthoDB" id="14602at9989"/>
<dbReference type="PhylomeDB" id="P23764"/>
<dbReference type="Reactome" id="R-RNO-3299685">
    <property type="pathway name" value="Detoxification of Reactive Oxygen Species"/>
</dbReference>
<dbReference type="PRO" id="PR:P23764"/>
<dbReference type="Proteomes" id="UP000002494">
    <property type="component" value="Unplaced"/>
</dbReference>
<dbReference type="GO" id="GO:0005615">
    <property type="term" value="C:extracellular space"/>
    <property type="evidence" value="ECO:0000314"/>
    <property type="project" value="RGD"/>
</dbReference>
<dbReference type="GO" id="GO:0004602">
    <property type="term" value="F:glutathione peroxidase activity"/>
    <property type="evidence" value="ECO:0000250"/>
    <property type="project" value="UniProtKB"/>
</dbReference>
<dbReference type="GO" id="GO:0042802">
    <property type="term" value="F:identical protein binding"/>
    <property type="evidence" value="ECO:0000250"/>
    <property type="project" value="UniProtKB"/>
</dbReference>
<dbReference type="GO" id="GO:0045340">
    <property type="term" value="F:mercury ion binding"/>
    <property type="evidence" value="ECO:0000314"/>
    <property type="project" value="RGD"/>
</dbReference>
<dbReference type="GO" id="GO:0008430">
    <property type="term" value="F:selenium binding"/>
    <property type="evidence" value="ECO:0000314"/>
    <property type="project" value="RGD"/>
</dbReference>
<dbReference type="GO" id="GO:0042744">
    <property type="term" value="P:hydrogen peroxide catabolic process"/>
    <property type="evidence" value="ECO:0000266"/>
    <property type="project" value="RGD"/>
</dbReference>
<dbReference type="GO" id="GO:1904612">
    <property type="term" value="P:response to 2,3,7,8-tetrachlorodibenzodioxine"/>
    <property type="evidence" value="ECO:0000270"/>
    <property type="project" value="RGD"/>
</dbReference>
<dbReference type="GO" id="GO:0051412">
    <property type="term" value="P:response to corticosterone"/>
    <property type="evidence" value="ECO:0000270"/>
    <property type="project" value="RGD"/>
</dbReference>
<dbReference type="GO" id="GO:0002238">
    <property type="term" value="P:response to molecule of fungal origin"/>
    <property type="evidence" value="ECO:0000270"/>
    <property type="project" value="RGD"/>
</dbReference>
<dbReference type="GO" id="GO:0006979">
    <property type="term" value="P:response to oxidative stress"/>
    <property type="evidence" value="ECO:0007669"/>
    <property type="project" value="InterPro"/>
</dbReference>
<dbReference type="GO" id="GO:0010269">
    <property type="term" value="P:response to selenium ion"/>
    <property type="evidence" value="ECO:0000270"/>
    <property type="project" value="RGD"/>
</dbReference>
<dbReference type="GO" id="GO:0009410">
    <property type="term" value="P:response to xenobiotic stimulus"/>
    <property type="evidence" value="ECO:0000270"/>
    <property type="project" value="RGD"/>
</dbReference>
<dbReference type="CDD" id="cd00340">
    <property type="entry name" value="GSH_Peroxidase"/>
    <property type="match status" value="1"/>
</dbReference>
<dbReference type="FunFam" id="3.40.30.10:FF:000112">
    <property type="entry name" value="Glutathione peroxidase"/>
    <property type="match status" value="1"/>
</dbReference>
<dbReference type="Gene3D" id="3.40.30.10">
    <property type="entry name" value="Glutaredoxin"/>
    <property type="match status" value="1"/>
</dbReference>
<dbReference type="InterPro" id="IPR000889">
    <property type="entry name" value="Glutathione_peroxidase"/>
</dbReference>
<dbReference type="InterPro" id="IPR029759">
    <property type="entry name" value="GPX_AS"/>
</dbReference>
<dbReference type="InterPro" id="IPR029760">
    <property type="entry name" value="GPX_CS"/>
</dbReference>
<dbReference type="InterPro" id="IPR036249">
    <property type="entry name" value="Thioredoxin-like_sf"/>
</dbReference>
<dbReference type="PANTHER" id="PTHR11592">
    <property type="entry name" value="GLUTATHIONE PEROXIDASE"/>
    <property type="match status" value="1"/>
</dbReference>
<dbReference type="PANTHER" id="PTHR11592:SF32">
    <property type="entry name" value="GLUTATHIONE PEROXIDASE 3"/>
    <property type="match status" value="1"/>
</dbReference>
<dbReference type="Pfam" id="PF00255">
    <property type="entry name" value="GSHPx"/>
    <property type="match status" value="1"/>
</dbReference>
<dbReference type="PIRSF" id="PIRSF000303">
    <property type="entry name" value="Glutathion_perox"/>
    <property type="match status" value="1"/>
</dbReference>
<dbReference type="PRINTS" id="PR01011">
    <property type="entry name" value="GLUTPROXDASE"/>
</dbReference>
<dbReference type="SUPFAM" id="SSF52833">
    <property type="entry name" value="Thioredoxin-like"/>
    <property type="match status" value="1"/>
</dbReference>
<dbReference type="PROSITE" id="PS00460">
    <property type="entry name" value="GLUTATHIONE_PEROXID_1"/>
    <property type="match status" value="1"/>
</dbReference>
<dbReference type="PROSITE" id="PS00763">
    <property type="entry name" value="GLUTATHIONE_PEROXID_2"/>
    <property type="match status" value="1"/>
</dbReference>
<dbReference type="PROSITE" id="PS51355">
    <property type="entry name" value="GLUTATHIONE_PEROXID_3"/>
    <property type="match status" value="1"/>
</dbReference>